<organism>
    <name type="scientific">Burkholderia pseudomallei (strain K96243)</name>
    <dbReference type="NCBI Taxonomy" id="272560"/>
    <lineage>
        <taxon>Bacteria</taxon>
        <taxon>Pseudomonadati</taxon>
        <taxon>Pseudomonadota</taxon>
        <taxon>Betaproteobacteria</taxon>
        <taxon>Burkholderiales</taxon>
        <taxon>Burkholderiaceae</taxon>
        <taxon>Burkholderia</taxon>
        <taxon>pseudomallei group</taxon>
    </lineage>
</organism>
<sequence>MIETDKLAAERIIAATPASSHEEAFERALRPRQLDEYVGQEKVRDQLEIFIEAAKRRSEALDHVLLFGPPGLGKTTLAHIIAREMGVNLRQTSGPVLERAGDLAALLTNLEANDVLFIDEIHRLSPVVEEILYPALEDYQIDIMIGEGPAARSVKLDLQPFTLVGATTRAGMLTNPLRDRFGIVARLEFYDAEQLSRIVRRSAALLNAQIDPAGALEIAKRSRGTPRIANRLLRRVRDYAEVKADGNITAAVADAALAMLDVDPVGFDLMDRKLLEAILHKFDGGPVGVDNLAAAIGEERDTIEDVLEPYLIQQGFLQRTPRGRVATLLTYRHFGLSAPDAANPVRNLWDTPDAEC</sequence>
<name>RUVB_BURPS</name>
<dbReference type="EC" id="3.6.4.-" evidence="1"/>
<dbReference type="EMBL" id="BX571965">
    <property type="protein sequence ID" value="CAH36909.1"/>
    <property type="molecule type" value="Genomic_DNA"/>
</dbReference>
<dbReference type="RefSeq" id="WP_004194268.1">
    <property type="nucleotide sequence ID" value="NZ_CP009538.1"/>
</dbReference>
<dbReference type="RefSeq" id="YP_109493.1">
    <property type="nucleotide sequence ID" value="NC_006350.1"/>
</dbReference>
<dbReference type="SMR" id="Q63QX5"/>
<dbReference type="STRING" id="272560.BPSL2899"/>
<dbReference type="GeneID" id="93061494"/>
<dbReference type="KEGG" id="bps:BPSL2899"/>
<dbReference type="PATRIC" id="fig|272560.51.peg.2390"/>
<dbReference type="eggNOG" id="COG2255">
    <property type="taxonomic scope" value="Bacteria"/>
</dbReference>
<dbReference type="Proteomes" id="UP000000605">
    <property type="component" value="Chromosome 1"/>
</dbReference>
<dbReference type="GO" id="GO:0005737">
    <property type="term" value="C:cytoplasm"/>
    <property type="evidence" value="ECO:0007669"/>
    <property type="project" value="UniProtKB-SubCell"/>
</dbReference>
<dbReference type="GO" id="GO:0048476">
    <property type="term" value="C:Holliday junction resolvase complex"/>
    <property type="evidence" value="ECO:0007669"/>
    <property type="project" value="UniProtKB-UniRule"/>
</dbReference>
<dbReference type="GO" id="GO:0005524">
    <property type="term" value="F:ATP binding"/>
    <property type="evidence" value="ECO:0007669"/>
    <property type="project" value="UniProtKB-UniRule"/>
</dbReference>
<dbReference type="GO" id="GO:0016887">
    <property type="term" value="F:ATP hydrolysis activity"/>
    <property type="evidence" value="ECO:0007669"/>
    <property type="project" value="InterPro"/>
</dbReference>
<dbReference type="GO" id="GO:0000400">
    <property type="term" value="F:four-way junction DNA binding"/>
    <property type="evidence" value="ECO:0007669"/>
    <property type="project" value="UniProtKB-UniRule"/>
</dbReference>
<dbReference type="GO" id="GO:0009378">
    <property type="term" value="F:four-way junction helicase activity"/>
    <property type="evidence" value="ECO:0007669"/>
    <property type="project" value="InterPro"/>
</dbReference>
<dbReference type="GO" id="GO:0006310">
    <property type="term" value="P:DNA recombination"/>
    <property type="evidence" value="ECO:0007669"/>
    <property type="project" value="UniProtKB-UniRule"/>
</dbReference>
<dbReference type="GO" id="GO:0006281">
    <property type="term" value="P:DNA repair"/>
    <property type="evidence" value="ECO:0007669"/>
    <property type="project" value="UniProtKB-UniRule"/>
</dbReference>
<dbReference type="CDD" id="cd00009">
    <property type="entry name" value="AAA"/>
    <property type="match status" value="1"/>
</dbReference>
<dbReference type="FunFam" id="1.10.10.10:FF:000086">
    <property type="entry name" value="Holliday junction ATP-dependent DNA helicase RuvB"/>
    <property type="match status" value="1"/>
</dbReference>
<dbReference type="FunFam" id="3.40.50.300:FF:000073">
    <property type="entry name" value="Holliday junction ATP-dependent DNA helicase RuvB"/>
    <property type="match status" value="1"/>
</dbReference>
<dbReference type="Gene3D" id="1.10.8.60">
    <property type="match status" value="1"/>
</dbReference>
<dbReference type="Gene3D" id="3.40.50.300">
    <property type="entry name" value="P-loop containing nucleotide triphosphate hydrolases"/>
    <property type="match status" value="1"/>
</dbReference>
<dbReference type="Gene3D" id="1.10.10.10">
    <property type="entry name" value="Winged helix-like DNA-binding domain superfamily/Winged helix DNA-binding domain"/>
    <property type="match status" value="1"/>
</dbReference>
<dbReference type="HAMAP" id="MF_00016">
    <property type="entry name" value="DNA_HJ_migration_RuvB"/>
    <property type="match status" value="1"/>
</dbReference>
<dbReference type="InterPro" id="IPR003593">
    <property type="entry name" value="AAA+_ATPase"/>
</dbReference>
<dbReference type="InterPro" id="IPR041445">
    <property type="entry name" value="AAA_lid_4"/>
</dbReference>
<dbReference type="InterPro" id="IPR004605">
    <property type="entry name" value="DNA_helicase_Holl-junc_RuvB"/>
</dbReference>
<dbReference type="InterPro" id="IPR027417">
    <property type="entry name" value="P-loop_NTPase"/>
</dbReference>
<dbReference type="InterPro" id="IPR008824">
    <property type="entry name" value="RuvB-like_N"/>
</dbReference>
<dbReference type="InterPro" id="IPR008823">
    <property type="entry name" value="RuvB_C"/>
</dbReference>
<dbReference type="InterPro" id="IPR036388">
    <property type="entry name" value="WH-like_DNA-bd_sf"/>
</dbReference>
<dbReference type="InterPro" id="IPR036390">
    <property type="entry name" value="WH_DNA-bd_sf"/>
</dbReference>
<dbReference type="NCBIfam" id="NF000868">
    <property type="entry name" value="PRK00080.1"/>
    <property type="match status" value="1"/>
</dbReference>
<dbReference type="NCBIfam" id="TIGR00635">
    <property type="entry name" value="ruvB"/>
    <property type="match status" value="1"/>
</dbReference>
<dbReference type="PANTHER" id="PTHR42848">
    <property type="match status" value="1"/>
</dbReference>
<dbReference type="PANTHER" id="PTHR42848:SF1">
    <property type="entry name" value="HOLLIDAY JUNCTION BRANCH MIGRATION COMPLEX SUBUNIT RUVB"/>
    <property type="match status" value="1"/>
</dbReference>
<dbReference type="Pfam" id="PF17864">
    <property type="entry name" value="AAA_lid_4"/>
    <property type="match status" value="1"/>
</dbReference>
<dbReference type="Pfam" id="PF05491">
    <property type="entry name" value="RuvB_C"/>
    <property type="match status" value="1"/>
</dbReference>
<dbReference type="Pfam" id="PF05496">
    <property type="entry name" value="RuvB_N"/>
    <property type="match status" value="1"/>
</dbReference>
<dbReference type="SMART" id="SM00382">
    <property type="entry name" value="AAA"/>
    <property type="match status" value="1"/>
</dbReference>
<dbReference type="SUPFAM" id="SSF52540">
    <property type="entry name" value="P-loop containing nucleoside triphosphate hydrolases"/>
    <property type="match status" value="1"/>
</dbReference>
<dbReference type="SUPFAM" id="SSF46785">
    <property type="entry name" value="Winged helix' DNA-binding domain"/>
    <property type="match status" value="1"/>
</dbReference>
<feature type="chain" id="PRO_0000165509" description="Holliday junction branch migration complex subunit RuvB">
    <location>
        <begin position="1"/>
        <end position="356"/>
    </location>
</feature>
<feature type="region of interest" description="Large ATPase domain (RuvB-L)" evidence="1">
    <location>
        <begin position="4"/>
        <end position="190"/>
    </location>
</feature>
<feature type="region of interest" description="Small ATPAse domain (RuvB-S)" evidence="1">
    <location>
        <begin position="191"/>
        <end position="261"/>
    </location>
</feature>
<feature type="region of interest" description="Head domain (RuvB-H)" evidence="1">
    <location>
        <begin position="264"/>
        <end position="356"/>
    </location>
</feature>
<feature type="binding site" evidence="1">
    <location>
        <position position="29"/>
    </location>
    <ligand>
        <name>ATP</name>
        <dbReference type="ChEBI" id="CHEBI:30616"/>
    </ligand>
</feature>
<feature type="binding site" evidence="1">
    <location>
        <position position="30"/>
    </location>
    <ligand>
        <name>ATP</name>
        <dbReference type="ChEBI" id="CHEBI:30616"/>
    </ligand>
</feature>
<feature type="binding site" evidence="1">
    <location>
        <position position="71"/>
    </location>
    <ligand>
        <name>ATP</name>
        <dbReference type="ChEBI" id="CHEBI:30616"/>
    </ligand>
</feature>
<feature type="binding site" evidence="1">
    <location>
        <position position="74"/>
    </location>
    <ligand>
        <name>ATP</name>
        <dbReference type="ChEBI" id="CHEBI:30616"/>
    </ligand>
</feature>
<feature type="binding site" evidence="1">
    <location>
        <position position="75"/>
    </location>
    <ligand>
        <name>ATP</name>
        <dbReference type="ChEBI" id="CHEBI:30616"/>
    </ligand>
</feature>
<feature type="binding site" evidence="1">
    <location>
        <position position="75"/>
    </location>
    <ligand>
        <name>Mg(2+)</name>
        <dbReference type="ChEBI" id="CHEBI:18420"/>
    </ligand>
</feature>
<feature type="binding site" evidence="1">
    <location>
        <position position="76"/>
    </location>
    <ligand>
        <name>ATP</name>
        <dbReference type="ChEBI" id="CHEBI:30616"/>
    </ligand>
</feature>
<feature type="binding site" evidence="1">
    <location>
        <begin position="137"/>
        <end position="139"/>
    </location>
    <ligand>
        <name>ATP</name>
        <dbReference type="ChEBI" id="CHEBI:30616"/>
    </ligand>
</feature>
<feature type="binding site" evidence="1">
    <location>
        <position position="180"/>
    </location>
    <ligand>
        <name>ATP</name>
        <dbReference type="ChEBI" id="CHEBI:30616"/>
    </ligand>
</feature>
<feature type="binding site" evidence="1">
    <location>
        <position position="190"/>
    </location>
    <ligand>
        <name>ATP</name>
        <dbReference type="ChEBI" id="CHEBI:30616"/>
    </ligand>
</feature>
<feature type="binding site" evidence="1">
    <location>
        <position position="227"/>
    </location>
    <ligand>
        <name>ATP</name>
        <dbReference type="ChEBI" id="CHEBI:30616"/>
    </ligand>
</feature>
<feature type="binding site" evidence="1">
    <location>
        <position position="300"/>
    </location>
    <ligand>
        <name>DNA</name>
        <dbReference type="ChEBI" id="CHEBI:16991"/>
    </ligand>
</feature>
<feature type="binding site" evidence="1">
    <location>
        <position position="319"/>
    </location>
    <ligand>
        <name>DNA</name>
        <dbReference type="ChEBI" id="CHEBI:16991"/>
    </ligand>
</feature>
<feature type="binding site" evidence="1">
    <location>
        <position position="324"/>
    </location>
    <ligand>
        <name>DNA</name>
        <dbReference type="ChEBI" id="CHEBI:16991"/>
    </ligand>
</feature>
<reference key="1">
    <citation type="journal article" date="2004" name="Proc. Natl. Acad. Sci. U.S.A.">
        <title>Genomic plasticity of the causative agent of melioidosis, Burkholderia pseudomallei.</title>
        <authorList>
            <person name="Holden M.T.G."/>
            <person name="Titball R.W."/>
            <person name="Peacock S.J."/>
            <person name="Cerdeno-Tarraga A.-M."/>
            <person name="Atkins T."/>
            <person name="Crossman L.C."/>
            <person name="Pitt T."/>
            <person name="Churcher C."/>
            <person name="Mungall K.L."/>
            <person name="Bentley S.D."/>
            <person name="Sebaihia M."/>
            <person name="Thomson N.R."/>
            <person name="Bason N."/>
            <person name="Beacham I.R."/>
            <person name="Brooks K."/>
            <person name="Brown K.A."/>
            <person name="Brown N.F."/>
            <person name="Challis G.L."/>
            <person name="Cherevach I."/>
            <person name="Chillingworth T."/>
            <person name="Cronin A."/>
            <person name="Crossett B."/>
            <person name="Davis P."/>
            <person name="DeShazer D."/>
            <person name="Feltwell T."/>
            <person name="Fraser A."/>
            <person name="Hance Z."/>
            <person name="Hauser H."/>
            <person name="Holroyd S."/>
            <person name="Jagels K."/>
            <person name="Keith K.E."/>
            <person name="Maddison M."/>
            <person name="Moule S."/>
            <person name="Price C."/>
            <person name="Quail M.A."/>
            <person name="Rabbinowitsch E."/>
            <person name="Rutherford K."/>
            <person name="Sanders M."/>
            <person name="Simmonds M."/>
            <person name="Songsivilai S."/>
            <person name="Stevens K."/>
            <person name="Tumapa S."/>
            <person name="Vesaratchavest M."/>
            <person name="Whitehead S."/>
            <person name="Yeats C."/>
            <person name="Barrell B.G."/>
            <person name="Oyston P.C.F."/>
            <person name="Parkhill J."/>
        </authorList>
    </citation>
    <scope>NUCLEOTIDE SEQUENCE [LARGE SCALE GENOMIC DNA]</scope>
    <source>
        <strain>K96243</strain>
    </source>
</reference>
<proteinExistence type="inferred from homology"/>
<evidence type="ECO:0000255" key="1">
    <source>
        <dbReference type="HAMAP-Rule" id="MF_00016"/>
    </source>
</evidence>
<gene>
    <name evidence="1" type="primary">ruvB</name>
    <name type="ordered locus">BPSL2899</name>
</gene>
<protein>
    <recommendedName>
        <fullName evidence="1">Holliday junction branch migration complex subunit RuvB</fullName>
        <ecNumber evidence="1">3.6.4.-</ecNumber>
    </recommendedName>
</protein>
<keyword id="KW-0067">ATP-binding</keyword>
<keyword id="KW-0963">Cytoplasm</keyword>
<keyword id="KW-0227">DNA damage</keyword>
<keyword id="KW-0233">DNA recombination</keyword>
<keyword id="KW-0234">DNA repair</keyword>
<keyword id="KW-0238">DNA-binding</keyword>
<keyword id="KW-0378">Hydrolase</keyword>
<keyword id="KW-0547">Nucleotide-binding</keyword>
<keyword id="KW-1185">Reference proteome</keyword>
<accession>Q63QX5</accession>
<comment type="function">
    <text evidence="1">The RuvA-RuvB-RuvC complex processes Holliday junction (HJ) DNA during genetic recombination and DNA repair, while the RuvA-RuvB complex plays an important role in the rescue of blocked DNA replication forks via replication fork reversal (RFR). RuvA specifically binds to HJ cruciform DNA, conferring on it an open structure. The RuvB hexamer acts as an ATP-dependent pump, pulling dsDNA into and through the RuvAB complex. RuvB forms 2 homohexamers on either side of HJ DNA bound by 1 or 2 RuvA tetramers; 4 subunits per hexamer contact DNA at a time. Coordinated motions by a converter formed by DNA-disengaged RuvB subunits stimulates ATP hydrolysis and nucleotide exchange. Immobilization of the converter enables RuvB to convert the ATP-contained energy into a lever motion, pulling 2 nucleotides of DNA out of the RuvA tetramer per ATP hydrolyzed, thus driving DNA branch migration. The RuvB motors rotate together with the DNA substrate, which together with the progressing nucleotide cycle form the mechanistic basis for DNA recombination by continuous HJ branch migration. Branch migration allows RuvC to scan DNA until it finds its consensus sequence, where it cleaves and resolves cruciform DNA.</text>
</comment>
<comment type="catalytic activity">
    <reaction evidence="1">
        <text>ATP + H2O = ADP + phosphate + H(+)</text>
        <dbReference type="Rhea" id="RHEA:13065"/>
        <dbReference type="ChEBI" id="CHEBI:15377"/>
        <dbReference type="ChEBI" id="CHEBI:15378"/>
        <dbReference type="ChEBI" id="CHEBI:30616"/>
        <dbReference type="ChEBI" id="CHEBI:43474"/>
        <dbReference type="ChEBI" id="CHEBI:456216"/>
    </reaction>
</comment>
<comment type="subunit">
    <text evidence="1">Homohexamer. Forms an RuvA(8)-RuvB(12)-Holliday junction (HJ) complex. HJ DNA is sandwiched between 2 RuvA tetramers; dsDNA enters through RuvA and exits via RuvB. An RuvB hexamer assembles on each DNA strand where it exits the tetramer. Each RuvB hexamer is contacted by two RuvA subunits (via domain III) on 2 adjacent RuvB subunits; this complex drives branch migration. In the full resolvosome a probable DNA-RuvA(4)-RuvB(12)-RuvC(2) complex forms which resolves the HJ.</text>
</comment>
<comment type="subcellular location">
    <subcellularLocation>
        <location evidence="1">Cytoplasm</location>
    </subcellularLocation>
</comment>
<comment type="domain">
    <text evidence="1">Has 3 domains, the large (RuvB-L) and small ATPase (RuvB-S) domains and the C-terminal head (RuvB-H) domain. The head domain binds DNA, while the ATPase domains jointly bind ATP, ADP or are empty depending on the state of the subunit in the translocation cycle. During a single DNA translocation step the structure of each domain remains the same, but their relative positions change.</text>
</comment>
<comment type="similarity">
    <text evidence="1">Belongs to the RuvB family.</text>
</comment>